<sequence>MSITLSDSAAARVNTFLANRGKGFGLRLGVRTSGCSGMAYVLEFVDEPTPEDIVFEDKGVKVVVDGKSLQFLDGTQLDFVKEGLNEGFKFTNPNVKDECGCGESFHV</sequence>
<dbReference type="EMBL" id="CU928145">
    <property type="protein sequence ID" value="CAU98686.1"/>
    <property type="molecule type" value="Genomic_DNA"/>
</dbReference>
<dbReference type="RefSeq" id="WP_000028953.1">
    <property type="nucleotide sequence ID" value="NZ_CP028304.1"/>
</dbReference>
<dbReference type="SMR" id="B7LDC0"/>
<dbReference type="GeneID" id="93774608"/>
<dbReference type="KEGG" id="eck:EC55989_2813"/>
<dbReference type="HOGENOM" id="CLU_069054_5_1_6"/>
<dbReference type="Proteomes" id="UP000000746">
    <property type="component" value="Chromosome"/>
</dbReference>
<dbReference type="GO" id="GO:0005829">
    <property type="term" value="C:cytosol"/>
    <property type="evidence" value="ECO:0007669"/>
    <property type="project" value="TreeGrafter"/>
</dbReference>
<dbReference type="GO" id="GO:0051537">
    <property type="term" value="F:2 iron, 2 sulfur cluster binding"/>
    <property type="evidence" value="ECO:0007669"/>
    <property type="project" value="UniProtKB-ARBA"/>
</dbReference>
<dbReference type="GO" id="GO:0005506">
    <property type="term" value="F:iron ion binding"/>
    <property type="evidence" value="ECO:0007669"/>
    <property type="project" value="UniProtKB-UniRule"/>
</dbReference>
<dbReference type="GO" id="GO:0016226">
    <property type="term" value="P:iron-sulfur cluster assembly"/>
    <property type="evidence" value="ECO:0007669"/>
    <property type="project" value="UniProtKB-UniRule"/>
</dbReference>
<dbReference type="FunFam" id="2.60.300.12:FF:000001">
    <property type="entry name" value="Iron-binding protein IscA"/>
    <property type="match status" value="1"/>
</dbReference>
<dbReference type="Gene3D" id="2.60.300.12">
    <property type="entry name" value="HesB-like domain"/>
    <property type="match status" value="1"/>
</dbReference>
<dbReference type="HAMAP" id="MF_01429">
    <property type="entry name" value="Fe_S_insert_IscA"/>
    <property type="match status" value="1"/>
</dbReference>
<dbReference type="InterPro" id="IPR050322">
    <property type="entry name" value="Fe-S_cluster_asmbl/transfer"/>
</dbReference>
<dbReference type="InterPro" id="IPR000361">
    <property type="entry name" value="FeS_biogenesis"/>
</dbReference>
<dbReference type="InterPro" id="IPR016092">
    <property type="entry name" value="FeS_cluster_insertion"/>
</dbReference>
<dbReference type="InterPro" id="IPR017870">
    <property type="entry name" value="FeS_cluster_insertion_CS"/>
</dbReference>
<dbReference type="InterPro" id="IPR035903">
    <property type="entry name" value="HesB-like_dom_sf"/>
</dbReference>
<dbReference type="InterPro" id="IPR011302">
    <property type="entry name" value="IscA_proteobacteria"/>
</dbReference>
<dbReference type="NCBIfam" id="TIGR00049">
    <property type="entry name" value="iron-sulfur cluster assembly accessory protein"/>
    <property type="match status" value="1"/>
</dbReference>
<dbReference type="NCBIfam" id="TIGR02011">
    <property type="entry name" value="IscA"/>
    <property type="match status" value="1"/>
</dbReference>
<dbReference type="NCBIfam" id="NF007049">
    <property type="entry name" value="PRK09502.1"/>
    <property type="match status" value="1"/>
</dbReference>
<dbReference type="PANTHER" id="PTHR10072:SF41">
    <property type="entry name" value="IRON-SULFUR CLUSTER ASSEMBLY 1 HOMOLOG, MITOCHONDRIAL"/>
    <property type="match status" value="1"/>
</dbReference>
<dbReference type="PANTHER" id="PTHR10072">
    <property type="entry name" value="IRON-SULFUR CLUSTER ASSEMBLY PROTEIN"/>
    <property type="match status" value="1"/>
</dbReference>
<dbReference type="Pfam" id="PF01521">
    <property type="entry name" value="Fe-S_biosyn"/>
    <property type="match status" value="1"/>
</dbReference>
<dbReference type="SUPFAM" id="SSF89360">
    <property type="entry name" value="HesB-like domain"/>
    <property type="match status" value="1"/>
</dbReference>
<dbReference type="PROSITE" id="PS01152">
    <property type="entry name" value="HESB"/>
    <property type="match status" value="1"/>
</dbReference>
<feature type="chain" id="PRO_1000184885" description="Iron-binding protein IscA">
    <location>
        <begin position="1"/>
        <end position="107"/>
    </location>
</feature>
<feature type="binding site" evidence="1">
    <location>
        <position position="35"/>
    </location>
    <ligand>
        <name>Fe cation</name>
        <dbReference type="ChEBI" id="CHEBI:24875"/>
    </ligand>
</feature>
<feature type="binding site" evidence="1">
    <location>
        <position position="99"/>
    </location>
    <ligand>
        <name>Fe cation</name>
        <dbReference type="ChEBI" id="CHEBI:24875"/>
    </ligand>
</feature>
<feature type="binding site" evidence="1">
    <location>
        <position position="101"/>
    </location>
    <ligand>
        <name>Fe cation</name>
        <dbReference type="ChEBI" id="CHEBI:24875"/>
    </ligand>
</feature>
<comment type="function">
    <text evidence="1">Is able to transfer iron-sulfur clusters to apo-ferredoxin. Multiple cycles of [2Fe2S] cluster formation and transfer are observed, suggesting that IscA acts catalytically. Recruits intracellular free iron so as to provide iron for the assembly of transient iron-sulfur cluster in IscU in the presence of IscS, L-cysteine and the thioredoxin reductase system TrxA/TrxB.</text>
</comment>
<comment type="cofactor">
    <cofactor evidence="1">
        <name>Fe cation</name>
        <dbReference type="ChEBI" id="CHEBI:24875"/>
    </cofactor>
    <text evidence="1">Binds 2 iron ions per dimer. The dimer may bind additional iron ions.</text>
</comment>
<comment type="subunit">
    <text evidence="1">Homodimer; may form tetramers and higher multimers.</text>
</comment>
<comment type="similarity">
    <text evidence="1">Belongs to the HesB/IscA family.</text>
</comment>
<name>ISCA_ECO55</name>
<keyword id="KW-0408">Iron</keyword>
<keyword id="KW-0479">Metal-binding</keyword>
<keyword id="KW-1185">Reference proteome</keyword>
<organism>
    <name type="scientific">Escherichia coli (strain 55989 / EAEC)</name>
    <dbReference type="NCBI Taxonomy" id="585055"/>
    <lineage>
        <taxon>Bacteria</taxon>
        <taxon>Pseudomonadati</taxon>
        <taxon>Pseudomonadota</taxon>
        <taxon>Gammaproteobacteria</taxon>
        <taxon>Enterobacterales</taxon>
        <taxon>Enterobacteriaceae</taxon>
        <taxon>Escherichia</taxon>
    </lineage>
</organism>
<reference key="1">
    <citation type="journal article" date="2009" name="PLoS Genet.">
        <title>Organised genome dynamics in the Escherichia coli species results in highly diverse adaptive paths.</title>
        <authorList>
            <person name="Touchon M."/>
            <person name="Hoede C."/>
            <person name="Tenaillon O."/>
            <person name="Barbe V."/>
            <person name="Baeriswyl S."/>
            <person name="Bidet P."/>
            <person name="Bingen E."/>
            <person name="Bonacorsi S."/>
            <person name="Bouchier C."/>
            <person name="Bouvet O."/>
            <person name="Calteau A."/>
            <person name="Chiapello H."/>
            <person name="Clermont O."/>
            <person name="Cruveiller S."/>
            <person name="Danchin A."/>
            <person name="Diard M."/>
            <person name="Dossat C."/>
            <person name="Karoui M.E."/>
            <person name="Frapy E."/>
            <person name="Garry L."/>
            <person name="Ghigo J.M."/>
            <person name="Gilles A.M."/>
            <person name="Johnson J."/>
            <person name="Le Bouguenec C."/>
            <person name="Lescat M."/>
            <person name="Mangenot S."/>
            <person name="Martinez-Jehanne V."/>
            <person name="Matic I."/>
            <person name="Nassif X."/>
            <person name="Oztas S."/>
            <person name="Petit M.A."/>
            <person name="Pichon C."/>
            <person name="Rouy Z."/>
            <person name="Ruf C.S."/>
            <person name="Schneider D."/>
            <person name="Tourret J."/>
            <person name="Vacherie B."/>
            <person name="Vallenet D."/>
            <person name="Medigue C."/>
            <person name="Rocha E.P.C."/>
            <person name="Denamur E."/>
        </authorList>
    </citation>
    <scope>NUCLEOTIDE SEQUENCE [LARGE SCALE GENOMIC DNA]</scope>
    <source>
        <strain>55989 / EAEC</strain>
    </source>
</reference>
<proteinExistence type="inferred from homology"/>
<protein>
    <recommendedName>
        <fullName evidence="1">Iron-binding protein IscA</fullName>
    </recommendedName>
    <alternativeName>
        <fullName evidence="1">Iron-sulfur cluster assembly protein</fullName>
    </alternativeName>
</protein>
<evidence type="ECO:0000255" key="1">
    <source>
        <dbReference type="HAMAP-Rule" id="MF_01429"/>
    </source>
</evidence>
<accession>B7LDC0</accession>
<gene>
    <name evidence="1" type="primary">iscA</name>
    <name type="ordered locus">EC55989_2813</name>
</gene>